<organism>
    <name type="scientific">Rattus norvegicus</name>
    <name type="common">Rat</name>
    <dbReference type="NCBI Taxonomy" id="10116"/>
    <lineage>
        <taxon>Eukaryota</taxon>
        <taxon>Metazoa</taxon>
        <taxon>Chordata</taxon>
        <taxon>Craniata</taxon>
        <taxon>Vertebrata</taxon>
        <taxon>Euteleostomi</taxon>
        <taxon>Mammalia</taxon>
        <taxon>Eutheria</taxon>
        <taxon>Euarchontoglires</taxon>
        <taxon>Glires</taxon>
        <taxon>Rodentia</taxon>
        <taxon>Myomorpha</taxon>
        <taxon>Muroidea</taxon>
        <taxon>Muridae</taxon>
        <taxon>Murinae</taxon>
        <taxon>Rattus</taxon>
    </lineage>
</organism>
<gene>
    <name type="primary">Lrrc42</name>
</gene>
<dbReference type="EMBL" id="BC098685">
    <property type="protein sequence ID" value="AAH98685.1"/>
    <property type="molecule type" value="mRNA"/>
</dbReference>
<dbReference type="RefSeq" id="NP_001020824.1">
    <property type="nucleotide sequence ID" value="NM_001025653.1"/>
</dbReference>
<dbReference type="RefSeq" id="XP_006238565.1">
    <property type="nucleotide sequence ID" value="XM_006238503.5"/>
</dbReference>
<dbReference type="RefSeq" id="XP_038965481.1">
    <property type="nucleotide sequence ID" value="XM_039109553.2"/>
</dbReference>
<dbReference type="FunCoup" id="Q4KM95">
    <property type="interactions" value="1655"/>
</dbReference>
<dbReference type="STRING" id="10116.ENSRNOP00000013575"/>
<dbReference type="PhosphoSitePlus" id="Q4KM95"/>
<dbReference type="PaxDb" id="10116-ENSRNOP00000013575"/>
<dbReference type="Ensembl" id="ENSRNOT00000013575.7">
    <property type="protein sequence ID" value="ENSRNOP00000013575.4"/>
    <property type="gene ID" value="ENSRNOG00000009983.7"/>
</dbReference>
<dbReference type="GeneID" id="298309"/>
<dbReference type="KEGG" id="rno:298309"/>
<dbReference type="AGR" id="RGD:1308919"/>
<dbReference type="CTD" id="115353"/>
<dbReference type="RGD" id="1308919">
    <property type="gene designation" value="Lrrc42"/>
</dbReference>
<dbReference type="eggNOG" id="ENOG502QQJZ">
    <property type="taxonomic scope" value="Eukaryota"/>
</dbReference>
<dbReference type="GeneTree" id="ENSGT00390000002727"/>
<dbReference type="HOGENOM" id="CLU_053705_0_0_1"/>
<dbReference type="InParanoid" id="Q4KM95"/>
<dbReference type="OMA" id="FYGKTHR"/>
<dbReference type="OrthoDB" id="120976at2759"/>
<dbReference type="PhylomeDB" id="Q4KM95"/>
<dbReference type="TreeFam" id="TF331102"/>
<dbReference type="PRO" id="PR:Q4KM95"/>
<dbReference type="Proteomes" id="UP000002494">
    <property type="component" value="Chromosome 5"/>
</dbReference>
<dbReference type="Bgee" id="ENSRNOG00000009983">
    <property type="expression patterns" value="Expressed in thymus and 20 other cell types or tissues"/>
</dbReference>
<dbReference type="Gene3D" id="3.80.10.10">
    <property type="entry name" value="Ribonuclease Inhibitor"/>
    <property type="match status" value="1"/>
</dbReference>
<dbReference type="InterPro" id="IPR001611">
    <property type="entry name" value="Leu-rich_rpt"/>
</dbReference>
<dbReference type="InterPro" id="IPR032675">
    <property type="entry name" value="LRR_dom_sf"/>
</dbReference>
<dbReference type="InterPro" id="IPR039631">
    <property type="entry name" value="LRRC42"/>
</dbReference>
<dbReference type="PANTHER" id="PTHR31994">
    <property type="entry name" value="LEUCINE-RICH REPEAT-CONTAINING PROTEIN 42"/>
    <property type="match status" value="1"/>
</dbReference>
<dbReference type="PANTHER" id="PTHR31994:SF3">
    <property type="entry name" value="LEUCINE-RICH REPEAT-CONTAINING PROTEIN 42"/>
    <property type="match status" value="1"/>
</dbReference>
<dbReference type="Pfam" id="PF13516">
    <property type="entry name" value="LRR_6"/>
    <property type="match status" value="3"/>
</dbReference>
<dbReference type="SUPFAM" id="SSF52047">
    <property type="entry name" value="RNI-like"/>
    <property type="match status" value="1"/>
</dbReference>
<reference key="1">
    <citation type="journal article" date="2004" name="Genome Res.">
        <title>The status, quality, and expansion of the NIH full-length cDNA project: the Mammalian Gene Collection (MGC).</title>
        <authorList>
            <consortium name="The MGC Project Team"/>
        </authorList>
    </citation>
    <scope>NUCLEOTIDE SEQUENCE [LARGE SCALE MRNA]</scope>
    <source>
        <tissue>Thymus</tissue>
    </source>
</reference>
<reference key="2">
    <citation type="journal article" date="2012" name="Nat. Commun.">
        <title>Quantitative maps of protein phosphorylation sites across 14 different rat organs and tissues.</title>
        <authorList>
            <person name="Lundby A."/>
            <person name="Secher A."/>
            <person name="Lage K."/>
            <person name="Nordsborg N.B."/>
            <person name="Dmytriyev A."/>
            <person name="Lundby C."/>
            <person name="Olsen J.V."/>
        </authorList>
    </citation>
    <scope>IDENTIFICATION BY MASS SPECTROMETRY [LARGE SCALE ANALYSIS]</scope>
</reference>
<comment type="similarity">
    <text evidence="3">Belongs to the LRRC42 family.</text>
</comment>
<accession>Q4KM95</accession>
<evidence type="ECO:0000250" key="1">
    <source>
        <dbReference type="UniProtKB" id="Q8R2U7"/>
    </source>
</evidence>
<evidence type="ECO:0000256" key="2">
    <source>
        <dbReference type="SAM" id="MobiDB-lite"/>
    </source>
</evidence>
<evidence type="ECO:0000305" key="3"/>
<protein>
    <recommendedName>
        <fullName>Leucine-rich repeat-containing protein 42</fullName>
    </recommendedName>
</protein>
<keyword id="KW-0433">Leucine-rich repeat</keyword>
<keyword id="KW-0597">Phosphoprotein</keyword>
<keyword id="KW-1185">Reference proteome</keyword>
<keyword id="KW-0677">Repeat</keyword>
<feature type="chain" id="PRO_0000223472" description="Leucine-rich repeat-containing protein 42">
    <location>
        <begin position="1"/>
        <end position="421"/>
    </location>
</feature>
<feature type="repeat" description="LRR 1">
    <location>
        <begin position="149"/>
        <end position="170"/>
    </location>
</feature>
<feature type="repeat" description="LRR 2">
    <location>
        <begin position="174"/>
        <end position="195"/>
    </location>
</feature>
<feature type="repeat" description="LRR 3">
    <location>
        <begin position="202"/>
        <end position="222"/>
    </location>
</feature>
<feature type="repeat" description="LRR 4">
    <location>
        <begin position="234"/>
        <end position="255"/>
    </location>
</feature>
<feature type="repeat" description="LRR 5">
    <location>
        <begin position="259"/>
        <end position="280"/>
    </location>
</feature>
<feature type="region of interest" description="Disordered" evidence="2">
    <location>
        <begin position="374"/>
        <end position="406"/>
    </location>
</feature>
<feature type="modified residue" description="Phosphoserine" evidence="1">
    <location>
        <position position="399"/>
    </location>
</feature>
<proteinExistence type="evidence at protein level"/>
<name>LRC42_RAT</name>
<sequence>MAYYLNSEAHLDPGPIYVRENGQLHMVSLALDGVKNSLQKPRPFRLFPKGFSVELCMNREDDTAQKEKTDHFIFTYTREGNLRYSAKSLFSLVLGFISDNVDHIDSLIGFPEQIAEKLFSAAEARQKFTEPGAGLRALQKFTEAYGSLVLCSLCLRNRYLVVAEKLEEIKSFRELTRLDLSCCWLGDEHELLEHLTNEALSSVTQLHLKDNCLSDAGIRKMTAPVRVLKRGLENLTLLDLSCNPEITDAGIGYLFSFRKLNCLDISGTGLKDIKAVKDKLRTHIGLVHSKVPLKEFDHSNCKTEGWADQIVLQWERVSVEAVRQRKDPEPRKAAQYFYQKRALTEASRKCPLAETHMNSSGKLQFYREKAPDCHEPLLSQESKKSKKRAFEESEQEQSSPQSAKQKCVCLAVEDWDLLNSY</sequence>